<reference key="1">
    <citation type="journal article" date="2009" name="BMC Genomics">
        <title>Genome evolution driven by host adaptations results in a more virulent and antimicrobial-resistant Streptococcus pneumoniae serotype 14.</title>
        <authorList>
            <person name="Ding F."/>
            <person name="Tang P."/>
            <person name="Hsu M.-H."/>
            <person name="Cui P."/>
            <person name="Hu S."/>
            <person name="Yu J."/>
            <person name="Chiu C.-H."/>
        </authorList>
    </citation>
    <scope>NUCLEOTIDE SEQUENCE [LARGE SCALE GENOMIC DNA]</scope>
    <source>
        <strain>CGSP14</strain>
    </source>
</reference>
<name>URK_STRPS</name>
<proteinExistence type="inferred from homology"/>
<keyword id="KW-0067">ATP-binding</keyword>
<keyword id="KW-0963">Cytoplasm</keyword>
<keyword id="KW-0418">Kinase</keyword>
<keyword id="KW-0547">Nucleotide-binding</keyword>
<keyword id="KW-0808">Transferase</keyword>
<accession>B2IPS2</accession>
<feature type="chain" id="PRO_1000129093" description="Uridine kinase">
    <location>
        <begin position="1"/>
        <end position="212"/>
    </location>
</feature>
<feature type="binding site" evidence="1">
    <location>
        <begin position="12"/>
        <end position="19"/>
    </location>
    <ligand>
        <name>ATP</name>
        <dbReference type="ChEBI" id="CHEBI:30616"/>
    </ligand>
</feature>
<protein>
    <recommendedName>
        <fullName evidence="1">Uridine kinase</fullName>
        <ecNumber evidence="1">2.7.1.48</ecNumber>
    </recommendedName>
    <alternativeName>
        <fullName evidence="1">Cytidine monophosphokinase</fullName>
    </alternativeName>
    <alternativeName>
        <fullName evidence="1">Uridine monophosphokinase</fullName>
    </alternativeName>
</protein>
<organism>
    <name type="scientific">Streptococcus pneumoniae (strain CGSP14)</name>
    <dbReference type="NCBI Taxonomy" id="516950"/>
    <lineage>
        <taxon>Bacteria</taxon>
        <taxon>Bacillati</taxon>
        <taxon>Bacillota</taxon>
        <taxon>Bacilli</taxon>
        <taxon>Lactobacillales</taxon>
        <taxon>Streptococcaceae</taxon>
        <taxon>Streptococcus</taxon>
    </lineage>
</organism>
<gene>
    <name evidence="1" type="primary">udk</name>
    <name type="ordered locus">SPCG_1092</name>
</gene>
<comment type="catalytic activity">
    <reaction evidence="1">
        <text>uridine + ATP = UMP + ADP + H(+)</text>
        <dbReference type="Rhea" id="RHEA:16825"/>
        <dbReference type="ChEBI" id="CHEBI:15378"/>
        <dbReference type="ChEBI" id="CHEBI:16704"/>
        <dbReference type="ChEBI" id="CHEBI:30616"/>
        <dbReference type="ChEBI" id="CHEBI:57865"/>
        <dbReference type="ChEBI" id="CHEBI:456216"/>
        <dbReference type="EC" id="2.7.1.48"/>
    </reaction>
</comment>
<comment type="catalytic activity">
    <reaction evidence="1">
        <text>cytidine + ATP = CMP + ADP + H(+)</text>
        <dbReference type="Rhea" id="RHEA:24674"/>
        <dbReference type="ChEBI" id="CHEBI:15378"/>
        <dbReference type="ChEBI" id="CHEBI:17562"/>
        <dbReference type="ChEBI" id="CHEBI:30616"/>
        <dbReference type="ChEBI" id="CHEBI:60377"/>
        <dbReference type="ChEBI" id="CHEBI:456216"/>
        <dbReference type="EC" id="2.7.1.48"/>
    </reaction>
</comment>
<comment type="pathway">
    <text evidence="1">Pyrimidine metabolism; CTP biosynthesis via salvage pathway; CTP from cytidine: step 1/3.</text>
</comment>
<comment type="pathway">
    <text evidence="1">Pyrimidine metabolism; UMP biosynthesis via salvage pathway; UMP from uridine: step 1/1.</text>
</comment>
<comment type="subcellular location">
    <subcellularLocation>
        <location evidence="1">Cytoplasm</location>
    </subcellularLocation>
</comment>
<comment type="similarity">
    <text evidence="1">Belongs to the uridine kinase family.</text>
</comment>
<evidence type="ECO:0000255" key="1">
    <source>
        <dbReference type="HAMAP-Rule" id="MF_00551"/>
    </source>
</evidence>
<dbReference type="EC" id="2.7.1.48" evidence="1"/>
<dbReference type="EMBL" id="CP001033">
    <property type="protein sequence ID" value="ACB90344.1"/>
    <property type="molecule type" value="Genomic_DNA"/>
</dbReference>
<dbReference type="RefSeq" id="WP_001181378.1">
    <property type="nucleotide sequence ID" value="NC_010582.1"/>
</dbReference>
<dbReference type="SMR" id="B2IPS2"/>
<dbReference type="GeneID" id="45653496"/>
<dbReference type="KEGG" id="spw:SPCG_1092"/>
<dbReference type="HOGENOM" id="CLU_021278_1_2_9"/>
<dbReference type="UniPathway" id="UPA00574">
    <property type="reaction ID" value="UER00637"/>
</dbReference>
<dbReference type="UniPathway" id="UPA00579">
    <property type="reaction ID" value="UER00640"/>
</dbReference>
<dbReference type="GO" id="GO:0005737">
    <property type="term" value="C:cytoplasm"/>
    <property type="evidence" value="ECO:0007669"/>
    <property type="project" value="UniProtKB-SubCell"/>
</dbReference>
<dbReference type="GO" id="GO:0005524">
    <property type="term" value="F:ATP binding"/>
    <property type="evidence" value="ECO:0007669"/>
    <property type="project" value="UniProtKB-UniRule"/>
</dbReference>
<dbReference type="GO" id="GO:0043771">
    <property type="term" value="F:cytidine kinase activity"/>
    <property type="evidence" value="ECO:0007669"/>
    <property type="project" value="RHEA"/>
</dbReference>
<dbReference type="GO" id="GO:0004849">
    <property type="term" value="F:uridine kinase activity"/>
    <property type="evidence" value="ECO:0007669"/>
    <property type="project" value="UniProtKB-UniRule"/>
</dbReference>
<dbReference type="GO" id="GO:0044211">
    <property type="term" value="P:CTP salvage"/>
    <property type="evidence" value="ECO:0007669"/>
    <property type="project" value="UniProtKB-UniRule"/>
</dbReference>
<dbReference type="GO" id="GO:0044206">
    <property type="term" value="P:UMP salvage"/>
    <property type="evidence" value="ECO:0007669"/>
    <property type="project" value="UniProtKB-UniRule"/>
</dbReference>
<dbReference type="CDD" id="cd02023">
    <property type="entry name" value="UMPK"/>
    <property type="match status" value="1"/>
</dbReference>
<dbReference type="Gene3D" id="3.40.50.300">
    <property type="entry name" value="P-loop containing nucleotide triphosphate hydrolases"/>
    <property type="match status" value="1"/>
</dbReference>
<dbReference type="HAMAP" id="MF_00551">
    <property type="entry name" value="Uridine_kinase"/>
    <property type="match status" value="1"/>
</dbReference>
<dbReference type="InterPro" id="IPR027417">
    <property type="entry name" value="P-loop_NTPase"/>
</dbReference>
<dbReference type="InterPro" id="IPR006083">
    <property type="entry name" value="PRK/URK"/>
</dbReference>
<dbReference type="InterPro" id="IPR026008">
    <property type="entry name" value="Uridine_kinase"/>
</dbReference>
<dbReference type="InterPro" id="IPR000764">
    <property type="entry name" value="Uridine_kinase-like"/>
</dbReference>
<dbReference type="NCBIfam" id="NF004018">
    <property type="entry name" value="PRK05480.1"/>
    <property type="match status" value="1"/>
</dbReference>
<dbReference type="NCBIfam" id="TIGR00235">
    <property type="entry name" value="udk"/>
    <property type="match status" value="1"/>
</dbReference>
<dbReference type="PANTHER" id="PTHR10285">
    <property type="entry name" value="URIDINE KINASE"/>
    <property type="match status" value="1"/>
</dbReference>
<dbReference type="Pfam" id="PF00485">
    <property type="entry name" value="PRK"/>
    <property type="match status" value="1"/>
</dbReference>
<dbReference type="PRINTS" id="PR00988">
    <property type="entry name" value="URIDINKINASE"/>
</dbReference>
<dbReference type="SUPFAM" id="SSF52540">
    <property type="entry name" value="P-loop containing nucleoside triphosphate hydrolases"/>
    <property type="match status" value="1"/>
</dbReference>
<sequence length="212" mass="24466">MQNRPIIIGVTGGSGGGKTSVSRAILSHFPDEKISMIEHDSYYKDQSHLTFEERVKTNYDHPFAFDTDLMIEQIKELLAGRPVDIPTYDYTEHTRSSKTYRQEPQDVFIVEGILVLEDKRLRDLMDIKIFVDTDDDVRIIRRIKRDMEERGRSLDSVINQYLGVVKPMYHQFIESTKRYADIVIPEGVSNTVAIDLLTTKIAKILEEARNSK</sequence>